<keyword id="KW-0997">Cell inner membrane</keyword>
<keyword id="KW-1003">Cell membrane</keyword>
<keyword id="KW-0201">Cytochrome c-type biogenesis</keyword>
<keyword id="KW-0349">Heme</keyword>
<keyword id="KW-0408">Iron</keyword>
<keyword id="KW-0472">Membrane</keyword>
<keyword id="KW-0479">Metal-binding</keyword>
<keyword id="KW-0735">Signal-anchor</keyword>
<keyword id="KW-0812">Transmembrane</keyword>
<keyword id="KW-1133">Transmembrane helix</keyword>
<reference key="1">
    <citation type="submission" date="2007-05" db="EMBL/GenBank/DDBJ databases">
        <title>Complete sequence of chromosome of Psychrobacter sp. PRwf-1.</title>
        <authorList>
            <consortium name="US DOE Joint Genome Institute"/>
            <person name="Copeland A."/>
            <person name="Lucas S."/>
            <person name="Lapidus A."/>
            <person name="Barry K."/>
            <person name="Detter J.C."/>
            <person name="Glavina del Rio T."/>
            <person name="Hammon N."/>
            <person name="Israni S."/>
            <person name="Dalin E."/>
            <person name="Tice H."/>
            <person name="Pitluck S."/>
            <person name="Chain P."/>
            <person name="Malfatti S."/>
            <person name="Shin M."/>
            <person name="Vergez L."/>
            <person name="Schmutz J."/>
            <person name="Larimer F."/>
            <person name="Land M."/>
            <person name="Hauser L."/>
            <person name="Kyrpides N."/>
            <person name="Kim E."/>
            <person name="Tiedje J."/>
            <person name="Richardson P."/>
        </authorList>
    </citation>
    <scope>NUCLEOTIDE SEQUENCE [LARGE SCALE GENOMIC DNA]</scope>
    <source>
        <strain>PRwf-1</strain>
    </source>
</reference>
<comment type="function">
    <text evidence="1">Heme chaperone required for the biogenesis of c-type cytochromes. Transiently binds heme delivered by CcmC and transfers the heme to apo-cytochromes in a process facilitated by CcmF and CcmH.</text>
</comment>
<comment type="subcellular location">
    <subcellularLocation>
        <location evidence="1">Cell inner membrane</location>
        <topology evidence="1">Single-pass type II membrane protein</topology>
        <orientation evidence="1">Periplasmic side</orientation>
    </subcellularLocation>
</comment>
<comment type="similarity">
    <text evidence="1">Belongs to the CcmE/CycJ family.</text>
</comment>
<proteinExistence type="inferred from homology"/>
<feature type="chain" id="PRO_1000073705" description="Cytochrome c-type biogenesis protein CcmE">
    <location>
        <begin position="1"/>
        <end position="175"/>
    </location>
</feature>
<feature type="topological domain" description="Cytoplasmic" evidence="1">
    <location>
        <begin position="1"/>
        <end position="8"/>
    </location>
</feature>
<feature type="transmembrane region" description="Helical; Signal-anchor for type II membrane protein" evidence="1">
    <location>
        <begin position="9"/>
        <end position="29"/>
    </location>
</feature>
<feature type="topological domain" description="Periplasmic" evidence="1">
    <location>
        <begin position="30"/>
        <end position="175"/>
    </location>
</feature>
<feature type="region of interest" description="Disordered" evidence="2">
    <location>
        <begin position="142"/>
        <end position="175"/>
    </location>
</feature>
<feature type="binding site" description="covalent" evidence="1">
    <location>
        <position position="124"/>
    </location>
    <ligand>
        <name>heme</name>
        <dbReference type="ChEBI" id="CHEBI:30413"/>
    </ligand>
</feature>
<feature type="binding site" description="axial binding residue" evidence="1">
    <location>
        <position position="128"/>
    </location>
    <ligand>
        <name>heme</name>
        <dbReference type="ChEBI" id="CHEBI:30413"/>
    </ligand>
    <ligandPart>
        <name>Fe</name>
        <dbReference type="ChEBI" id="CHEBI:18248"/>
    </ligandPart>
</feature>
<accession>A5WHG7</accession>
<name>CCME_PSYWF</name>
<organism>
    <name type="scientific">Psychrobacter sp. (strain PRwf-1)</name>
    <dbReference type="NCBI Taxonomy" id="349106"/>
    <lineage>
        <taxon>Bacteria</taxon>
        <taxon>Pseudomonadati</taxon>
        <taxon>Pseudomonadota</taxon>
        <taxon>Gammaproteobacteria</taxon>
        <taxon>Moraxellales</taxon>
        <taxon>Moraxellaceae</taxon>
        <taxon>Psychrobacter</taxon>
    </lineage>
</organism>
<protein>
    <recommendedName>
        <fullName evidence="1">Cytochrome c-type biogenesis protein CcmE</fullName>
    </recommendedName>
    <alternativeName>
        <fullName evidence="1">Cytochrome c maturation protein E</fullName>
    </alternativeName>
    <alternativeName>
        <fullName evidence="1">Heme chaperone CcmE</fullName>
    </alternativeName>
</protein>
<dbReference type="EMBL" id="CP000713">
    <property type="protein sequence ID" value="ABQ95108.1"/>
    <property type="molecule type" value="Genomic_DNA"/>
</dbReference>
<dbReference type="SMR" id="A5WHG7"/>
<dbReference type="STRING" id="349106.PsycPRwf_2168"/>
<dbReference type="KEGG" id="prw:PsycPRwf_2168"/>
<dbReference type="eggNOG" id="COG2332">
    <property type="taxonomic scope" value="Bacteria"/>
</dbReference>
<dbReference type="HOGENOM" id="CLU_079503_1_1_6"/>
<dbReference type="GO" id="GO:0005886">
    <property type="term" value="C:plasma membrane"/>
    <property type="evidence" value="ECO:0007669"/>
    <property type="project" value="UniProtKB-SubCell"/>
</dbReference>
<dbReference type="GO" id="GO:0020037">
    <property type="term" value="F:heme binding"/>
    <property type="evidence" value="ECO:0007669"/>
    <property type="project" value="InterPro"/>
</dbReference>
<dbReference type="GO" id="GO:0046872">
    <property type="term" value="F:metal ion binding"/>
    <property type="evidence" value="ECO:0007669"/>
    <property type="project" value="UniProtKB-KW"/>
</dbReference>
<dbReference type="GO" id="GO:0017004">
    <property type="term" value="P:cytochrome complex assembly"/>
    <property type="evidence" value="ECO:0007669"/>
    <property type="project" value="UniProtKB-KW"/>
</dbReference>
<dbReference type="FunFam" id="2.40.50.140:FF:000104">
    <property type="entry name" value="Cytochrome c-type biogenesis protein CcmE"/>
    <property type="match status" value="1"/>
</dbReference>
<dbReference type="Gene3D" id="2.40.50.140">
    <property type="entry name" value="Nucleic acid-binding proteins"/>
    <property type="match status" value="1"/>
</dbReference>
<dbReference type="HAMAP" id="MF_01959">
    <property type="entry name" value="CcmE"/>
    <property type="match status" value="1"/>
</dbReference>
<dbReference type="InterPro" id="IPR004329">
    <property type="entry name" value="CcmE"/>
</dbReference>
<dbReference type="InterPro" id="IPR036127">
    <property type="entry name" value="CcmE-like_sf"/>
</dbReference>
<dbReference type="InterPro" id="IPR012340">
    <property type="entry name" value="NA-bd_OB-fold"/>
</dbReference>
<dbReference type="NCBIfam" id="NF009727">
    <property type="entry name" value="PRK13254.1-1"/>
    <property type="match status" value="1"/>
</dbReference>
<dbReference type="NCBIfam" id="NF009729">
    <property type="entry name" value="PRK13254.1-3"/>
    <property type="match status" value="1"/>
</dbReference>
<dbReference type="NCBIfam" id="NF009731">
    <property type="entry name" value="PRK13254.1-5"/>
    <property type="match status" value="1"/>
</dbReference>
<dbReference type="PANTHER" id="PTHR34128">
    <property type="entry name" value="CYTOCHROME C-TYPE BIOGENESIS PROTEIN CCME HOMOLOG, MITOCHONDRIAL"/>
    <property type="match status" value="1"/>
</dbReference>
<dbReference type="PANTHER" id="PTHR34128:SF2">
    <property type="entry name" value="CYTOCHROME C-TYPE BIOGENESIS PROTEIN CCME HOMOLOG, MITOCHONDRIAL"/>
    <property type="match status" value="1"/>
</dbReference>
<dbReference type="Pfam" id="PF03100">
    <property type="entry name" value="CcmE"/>
    <property type="match status" value="1"/>
</dbReference>
<dbReference type="SUPFAM" id="SSF82093">
    <property type="entry name" value="Heme chaperone CcmE"/>
    <property type="match status" value="1"/>
</dbReference>
<evidence type="ECO:0000255" key="1">
    <source>
        <dbReference type="HAMAP-Rule" id="MF_01959"/>
    </source>
</evidence>
<evidence type="ECO:0000256" key="2">
    <source>
        <dbReference type="SAM" id="MobiDB-lite"/>
    </source>
</evidence>
<sequence>MNAVRRKKLIWVAATLAGAIIAVLLVIYAIGQQTDYYFDPTAIAAGDAPQNKRIRAGGMVVKDSVRRDPNDDLKVQFEITDFNATVPVSYQGILPDLFAENSGVVATGEMQGKVFVASEVLAKHDENYMPPEVAASLKEDHAAKGVTPTSEQFSPAIPVKQTAGEGNHTTSTLQE</sequence>
<gene>
    <name evidence="1" type="primary">ccmE</name>
    <name evidence="1" type="synonym">cycJ</name>
    <name type="ordered locus">PsycPRwf_2168</name>
</gene>